<sequence length="346" mass="38867">DLGAVIYLLLWGRQLFALYSSNDVTDISDDRFPKPPEIANGYVEHLFRYQRKNYYRLRTEGDGVYTLNDKKQWINKAVGDKLPECEAVCGKPKNPANPVQRILGGHLDAKGSFPWQAKMVSRHNLTTGATLINEQWLLTTAKNLFLSHSENATAKDSAPTLTLYVGKKQLVEIEKVVLHPNYHQVDIGLIKLKQKVLVNERVMPICLPSKNYAEVGRVGYVSGWGQSNNFKLTDHLKYVMLPVADQDQCIRHYEGSTVPEKKTPKSPVGVQPILNEHTFCAGMSKYQEDTCYGDAGSAFAVHDLEEDTWYAAGILSFDKSCAVAEYGVYVKVTSIHVWVQKTIAEN</sequence>
<dbReference type="EMBL" id="M84463">
    <property type="protein sequence ID" value="AAA70197.1"/>
    <property type="molecule type" value="Genomic_DNA"/>
</dbReference>
<dbReference type="EMBL" id="M20761">
    <property type="protein sequence ID" value="AAA35413.1"/>
    <property type="molecule type" value="Genomic_DNA"/>
</dbReference>
<dbReference type="PIR" id="I36942">
    <property type="entry name" value="I36942"/>
</dbReference>
<dbReference type="SMR" id="Q28801"/>
<dbReference type="FunCoup" id="Q28801">
    <property type="interactions" value="140"/>
</dbReference>
<dbReference type="STRING" id="9598.ENSPTRP00000062259"/>
<dbReference type="MEROPS" id="S01.972"/>
<dbReference type="PaxDb" id="9598-ENSPTRP00000055139"/>
<dbReference type="eggNOG" id="KOG3627">
    <property type="taxonomic scope" value="Eukaryota"/>
</dbReference>
<dbReference type="InParanoid" id="Q28801"/>
<dbReference type="Proteomes" id="UP000002277">
    <property type="component" value="Unplaced"/>
</dbReference>
<dbReference type="GO" id="GO:0072562">
    <property type="term" value="C:blood microparticle"/>
    <property type="evidence" value="ECO:0000318"/>
    <property type="project" value="GO_Central"/>
</dbReference>
<dbReference type="GO" id="GO:0005615">
    <property type="term" value="C:extracellular space"/>
    <property type="evidence" value="ECO:0000318"/>
    <property type="project" value="GO_Central"/>
</dbReference>
<dbReference type="GO" id="GO:0030492">
    <property type="term" value="F:hemoglobin binding"/>
    <property type="evidence" value="ECO:0007669"/>
    <property type="project" value="UniProtKB-KW"/>
</dbReference>
<dbReference type="GO" id="GO:0004252">
    <property type="term" value="F:serine-type endopeptidase activity"/>
    <property type="evidence" value="ECO:0000318"/>
    <property type="project" value="GO_Central"/>
</dbReference>
<dbReference type="GO" id="GO:0031638">
    <property type="term" value="P:zymogen activation"/>
    <property type="evidence" value="ECO:0000318"/>
    <property type="project" value="GO_Central"/>
</dbReference>
<dbReference type="CDD" id="cd00190">
    <property type="entry name" value="Tryp_SPc"/>
    <property type="match status" value="1"/>
</dbReference>
<dbReference type="FunFam" id="2.10.70.10:FF:000048">
    <property type="entry name" value="Haptoglobin"/>
    <property type="match status" value="1"/>
</dbReference>
<dbReference type="FunFam" id="2.40.10.10:FF:000027">
    <property type="entry name" value="Haptoglobin"/>
    <property type="match status" value="1"/>
</dbReference>
<dbReference type="FunFam" id="2.40.10.10:FF:000031">
    <property type="entry name" value="Haptoglobin"/>
    <property type="match status" value="1"/>
</dbReference>
<dbReference type="Gene3D" id="2.10.70.10">
    <property type="entry name" value="Complement Module, domain 1"/>
    <property type="match status" value="1"/>
</dbReference>
<dbReference type="Gene3D" id="2.40.10.10">
    <property type="entry name" value="Trypsin-like serine proteases"/>
    <property type="match status" value="2"/>
</dbReference>
<dbReference type="InterPro" id="IPR008292">
    <property type="entry name" value="Haptoglobin"/>
</dbReference>
<dbReference type="InterPro" id="IPR009003">
    <property type="entry name" value="Peptidase_S1_PA"/>
</dbReference>
<dbReference type="InterPro" id="IPR043504">
    <property type="entry name" value="Peptidase_S1_PA_chymotrypsin"/>
</dbReference>
<dbReference type="InterPro" id="IPR001314">
    <property type="entry name" value="Peptidase_S1A"/>
</dbReference>
<dbReference type="InterPro" id="IPR001254">
    <property type="entry name" value="Trypsin_dom"/>
</dbReference>
<dbReference type="PANTHER" id="PTHR24255">
    <property type="entry name" value="COMPLEMENT COMPONENT 1, S SUBCOMPONENT-RELATED"/>
    <property type="match status" value="1"/>
</dbReference>
<dbReference type="PANTHER" id="PTHR24255:SF27">
    <property type="entry name" value="HAPTOGLOBIN-RELATED PROTEIN"/>
    <property type="match status" value="1"/>
</dbReference>
<dbReference type="Pfam" id="PF00089">
    <property type="entry name" value="Trypsin"/>
    <property type="match status" value="1"/>
</dbReference>
<dbReference type="PIRSF" id="PIRSF001137">
    <property type="entry name" value="Haptoglobin"/>
    <property type="match status" value="1"/>
</dbReference>
<dbReference type="PRINTS" id="PR00722">
    <property type="entry name" value="CHYMOTRYPSIN"/>
</dbReference>
<dbReference type="SMART" id="SM00020">
    <property type="entry name" value="Tryp_SPc"/>
    <property type="match status" value="1"/>
</dbReference>
<dbReference type="SUPFAM" id="SSF50494">
    <property type="entry name" value="Trypsin-like serine proteases"/>
    <property type="match status" value="1"/>
</dbReference>
<dbReference type="PROSITE" id="PS50240">
    <property type="entry name" value="TRYPSIN_DOM"/>
    <property type="match status" value="1"/>
</dbReference>
<protein>
    <recommendedName>
        <fullName>Haptoglobin-related protein</fullName>
    </recommendedName>
</protein>
<keyword id="KW-1015">Disulfide bond</keyword>
<keyword id="KW-0351">Hemoglobin-binding</keyword>
<keyword id="KW-1185">Reference proteome</keyword>
<keyword id="KW-0964">Secreted</keyword>
<keyword id="KW-0721">Serine protease homolog</keyword>
<keyword id="KW-0732">Signal</keyword>
<keyword id="KW-0768">Sushi</keyword>
<gene>
    <name type="primary">HPR</name>
</gene>
<proteinExistence type="inferred from homology"/>
<accession>Q28801</accession>
<accession>Q28804</accession>
<feature type="chain" id="PRO_0000028487" description="Haptoglobin-related protein">
    <location>
        <begin position="1" status="less than"/>
        <end position="346"/>
    </location>
</feature>
<feature type="signal peptide" description="Not cleaved" evidence="1">
    <location>
        <begin position="1" status="less than"/>
        <end position="16"/>
    </location>
</feature>
<feature type="domain" description="Sushi">
    <location>
        <begin position="32"/>
        <end position="85"/>
    </location>
</feature>
<feature type="domain" description="Peptidase S1" evidence="2">
    <location>
        <begin position="102"/>
        <end position="344"/>
    </location>
</feature>
<feature type="disulfide bond" evidence="2">
    <location>
        <begin position="249"/>
        <end position="280"/>
    </location>
</feature>
<feature type="disulfide bond" evidence="2">
    <location>
        <begin position="291"/>
        <end position="321"/>
    </location>
</feature>
<feature type="sequence conflict" description="In Ref. 2; AAA35413." evidence="3" ref="2">
    <original>R</original>
    <variation>H</variation>
    <location>
        <position position="122"/>
    </location>
</feature>
<feature type="sequence conflict" description="In Ref. 2; AAA35413." evidence="3" ref="2">
    <original>S</original>
    <variation>N</variation>
    <location>
        <position position="147"/>
    </location>
</feature>
<feature type="sequence conflict" description="In Ref. 2; AAA35413." evidence="3" ref="2">
    <original>S</original>
    <variation>I</variation>
    <location>
        <position position="157"/>
    </location>
</feature>
<feature type="sequence conflict" description="In Ref. 2; AAA35413." evidence="3" ref="2">
    <original>R</original>
    <variation>P</variation>
    <location>
        <position position="217"/>
    </location>
</feature>
<feature type="non-terminal residue">
    <location>
        <position position="1"/>
    </location>
</feature>
<name>HPTR_PANTR</name>
<reference key="1">
    <citation type="journal article" date="1992" name="Genomics">
        <title>Junctions between genes in the haptoglobin gene cluster of primates.</title>
        <authorList>
            <person name="Erickson L.M."/>
            <person name="Kim H.S."/>
            <person name="Maeda N."/>
        </authorList>
    </citation>
    <scope>NUCLEOTIDE SEQUENCE [GENOMIC DNA]</scope>
</reference>
<reference key="2">
    <citation type="journal article" date="1988" name="J. Biol. Chem.">
        <title>Complex events in the evolution of the haptoglobin gene cluster in primates.</title>
        <authorList>
            <person name="McEvoy S.M."/>
            <person name="Maeda N."/>
        </authorList>
    </citation>
    <scope>NUCLEOTIDE SEQUENCE [GENOMIC DNA] OF 89-346</scope>
</reference>
<organism>
    <name type="scientific">Pan troglodytes</name>
    <name type="common">Chimpanzee</name>
    <dbReference type="NCBI Taxonomy" id="9598"/>
    <lineage>
        <taxon>Eukaryota</taxon>
        <taxon>Metazoa</taxon>
        <taxon>Chordata</taxon>
        <taxon>Craniata</taxon>
        <taxon>Vertebrata</taxon>
        <taxon>Euteleostomi</taxon>
        <taxon>Mammalia</taxon>
        <taxon>Eutheria</taxon>
        <taxon>Euarchontoglires</taxon>
        <taxon>Primates</taxon>
        <taxon>Haplorrhini</taxon>
        <taxon>Catarrhini</taxon>
        <taxon>Hominidae</taxon>
        <taxon>Pan</taxon>
    </lineage>
</organism>
<comment type="function">
    <text evidence="1">Primate-specific plasma protein associated with apolipoprotein L-I (apoL-I)-containing high-density lipoprotein (HDL). Binds hemoglobin with high affinity and may contribute to the clearance of cell-free hemoglobin to allow hepatic recycling of heme iron.</text>
</comment>
<comment type="subcellular location">
    <subcellularLocation>
        <location evidence="1">Secreted</location>
    </subcellularLocation>
    <text evidence="1">Secreted into blood plasma and associated with subtypes of high density lipoproteins (HDL).</text>
</comment>
<comment type="domain">
    <text evidence="1">The uncleaved signal sequence interacts with HDL fluid lipids and mediates incorporation into the HDL particle.</text>
</comment>
<comment type="similarity">
    <text evidence="2">Belongs to the peptidase S1 family.</text>
</comment>
<comment type="caution">
    <text evidence="3">Although homologous to serine proteases, it has lost all essential catalytic residues and has no enzymatic activity.</text>
</comment>
<evidence type="ECO:0000250" key="1">
    <source>
        <dbReference type="UniProtKB" id="P00739"/>
    </source>
</evidence>
<evidence type="ECO:0000255" key="2">
    <source>
        <dbReference type="PROSITE-ProRule" id="PRU00274"/>
    </source>
</evidence>
<evidence type="ECO:0000305" key="3"/>